<accession>Q9KJE8</accession>
<keyword id="KW-0058">Aromatic hydrocarbons catabolism</keyword>
<keyword id="KW-0903">Direct protein sequencing</keyword>
<keyword id="KW-0274">FAD</keyword>
<keyword id="KW-0285">Flavoprotein</keyword>
<keyword id="KW-0560">Oxidoreductase</keyword>
<evidence type="ECO:0000269" key="1">
    <source>
    </source>
</evidence>
<evidence type="ECO:0000269" key="2">
    <source>
    </source>
</evidence>
<evidence type="ECO:0000305" key="3"/>
<feature type="chain" id="PRO_0000201205" description="(R)-benzylsuccinyl-CoA dehydrogenase">
    <location>
        <begin position="1"/>
        <end position="406"/>
    </location>
</feature>
<dbReference type="EC" id="1.3.8.3"/>
<dbReference type="EMBL" id="AF173961">
    <property type="protein sequence ID" value="AAF89842.1"/>
    <property type="molecule type" value="Genomic_DNA"/>
</dbReference>
<dbReference type="SMR" id="Q9KJE8"/>
<dbReference type="KEGG" id="ag:AAF89842"/>
<dbReference type="BioCyc" id="MetaCyc:MONOMER-687"/>
<dbReference type="UniPathway" id="UPA00273"/>
<dbReference type="GO" id="GO:0005737">
    <property type="term" value="C:cytoplasm"/>
    <property type="evidence" value="ECO:0007669"/>
    <property type="project" value="TreeGrafter"/>
</dbReference>
<dbReference type="GO" id="GO:0033734">
    <property type="term" value="F:(R)-benzylsuccinyl-CoA dehydrogenase activity"/>
    <property type="evidence" value="ECO:0007669"/>
    <property type="project" value="UniProtKB-EC"/>
</dbReference>
<dbReference type="GO" id="GO:0003995">
    <property type="term" value="F:acyl-CoA dehydrogenase activity"/>
    <property type="evidence" value="ECO:0007669"/>
    <property type="project" value="TreeGrafter"/>
</dbReference>
<dbReference type="GO" id="GO:0050660">
    <property type="term" value="F:flavin adenine dinucleotide binding"/>
    <property type="evidence" value="ECO:0007669"/>
    <property type="project" value="InterPro"/>
</dbReference>
<dbReference type="GO" id="GO:0033539">
    <property type="term" value="P:fatty acid beta-oxidation using acyl-CoA dehydrogenase"/>
    <property type="evidence" value="ECO:0007669"/>
    <property type="project" value="TreeGrafter"/>
</dbReference>
<dbReference type="GO" id="GO:0042203">
    <property type="term" value="P:toluene catabolic process"/>
    <property type="evidence" value="ECO:0007669"/>
    <property type="project" value="UniProtKB-UniPathway"/>
</dbReference>
<dbReference type="CDD" id="cd00567">
    <property type="entry name" value="ACAD"/>
    <property type="match status" value="1"/>
</dbReference>
<dbReference type="Gene3D" id="1.10.540.10">
    <property type="entry name" value="Acyl-CoA dehydrogenase/oxidase, N-terminal domain"/>
    <property type="match status" value="1"/>
</dbReference>
<dbReference type="Gene3D" id="2.40.110.10">
    <property type="entry name" value="Butyryl-CoA Dehydrogenase, subunit A, domain 2"/>
    <property type="match status" value="1"/>
</dbReference>
<dbReference type="Gene3D" id="1.20.140.10">
    <property type="entry name" value="Butyryl-CoA Dehydrogenase, subunit A, domain 3"/>
    <property type="match status" value="1"/>
</dbReference>
<dbReference type="InterPro" id="IPR050741">
    <property type="entry name" value="Acyl-CoA_dehydrogenase"/>
</dbReference>
<dbReference type="InterPro" id="IPR006091">
    <property type="entry name" value="Acyl-CoA_Oxase/DH_mid-dom"/>
</dbReference>
<dbReference type="InterPro" id="IPR046373">
    <property type="entry name" value="Acyl-CoA_Oxase/DH_mid-dom_sf"/>
</dbReference>
<dbReference type="InterPro" id="IPR036250">
    <property type="entry name" value="AcylCo_DH-like_C"/>
</dbReference>
<dbReference type="InterPro" id="IPR009075">
    <property type="entry name" value="AcylCo_DH/oxidase_C"/>
</dbReference>
<dbReference type="InterPro" id="IPR013786">
    <property type="entry name" value="AcylCoA_DH/ox_N"/>
</dbReference>
<dbReference type="InterPro" id="IPR037069">
    <property type="entry name" value="AcylCoA_DH/ox_N_sf"/>
</dbReference>
<dbReference type="InterPro" id="IPR009100">
    <property type="entry name" value="AcylCoA_DH/oxidase_NM_dom_sf"/>
</dbReference>
<dbReference type="PANTHER" id="PTHR48083:SF2">
    <property type="entry name" value="MEDIUM-CHAIN SPECIFIC ACYL-COA DEHYDROGENASE, MITOCHONDRIAL"/>
    <property type="match status" value="1"/>
</dbReference>
<dbReference type="PANTHER" id="PTHR48083">
    <property type="entry name" value="MEDIUM-CHAIN SPECIFIC ACYL-COA DEHYDROGENASE, MITOCHONDRIAL-RELATED"/>
    <property type="match status" value="1"/>
</dbReference>
<dbReference type="Pfam" id="PF00441">
    <property type="entry name" value="Acyl-CoA_dh_1"/>
    <property type="match status" value="1"/>
</dbReference>
<dbReference type="Pfam" id="PF02770">
    <property type="entry name" value="Acyl-CoA_dh_M"/>
    <property type="match status" value="1"/>
</dbReference>
<dbReference type="Pfam" id="PF02771">
    <property type="entry name" value="Acyl-CoA_dh_N"/>
    <property type="match status" value="1"/>
</dbReference>
<dbReference type="SUPFAM" id="SSF47203">
    <property type="entry name" value="Acyl-CoA dehydrogenase C-terminal domain-like"/>
    <property type="match status" value="1"/>
</dbReference>
<dbReference type="SUPFAM" id="SSF56645">
    <property type="entry name" value="Acyl-CoA dehydrogenase NM domain-like"/>
    <property type="match status" value="1"/>
</dbReference>
<reference key="1">
    <citation type="journal article" date="2000" name="J. Bacteriol.">
        <title>Anaerobic toluene catabolism of Thauera aromatica: the bbs operon codes for enzymes of beta-oxidation of the intermediate benzylsuccinate.</title>
        <authorList>
            <person name="Leuthner B."/>
            <person name="Heider J."/>
        </authorList>
    </citation>
    <scope>NUCLEOTIDE SEQUENCE [GENOMIC DNA]</scope>
    <scope>PROTEIN SEQUENCE OF 1-10</scope>
    <scope>PATHWAY</scope>
    <scope>INDUCTION</scope>
    <scope>GENE NAME</scope>
    <source>
        <strain>DSM 6984 / CIP 107765 / K172</strain>
    </source>
</reference>
<reference key="2">
    <citation type="journal article" date="2002" name="Arch. Microbiol.">
        <title>(R)-benzylsuccinyl-CoA dehydrogenase of Thauera aromatica, an enzyme of the anaerobic toluene catabolic pathway.</title>
        <authorList>
            <person name="Leutwein C."/>
            <person name="Heider J."/>
        </authorList>
    </citation>
    <scope>PROTEIN SEQUENCE OF 1-6</scope>
    <scope>FUNCTION</scope>
    <scope>CATALYTIC ACTIVITY</scope>
    <scope>COFACTOR</scope>
    <scope>ACTIVITY REGULATION</scope>
    <scope>BIOPHYSICOCHEMICAL PROPERTIES</scope>
    <scope>PATHWAY</scope>
    <scope>SUBUNIT</scope>
    <source>
        <strain>DSM 6984 / CIP 107765 / K172</strain>
    </source>
</reference>
<name>BBSG_THAAR</name>
<protein>
    <recommendedName>
        <fullName>(R)-benzylsuccinyl-CoA dehydrogenase</fullName>
        <ecNumber>1.3.8.3</ecNumber>
    </recommendedName>
</protein>
<comment type="function">
    <text evidence="2">Catalyzes the oxidation of benzylsuccinyl-CoA to benzylidenesuccinyl-CoA.</text>
</comment>
<comment type="catalytic activity">
    <reaction evidence="2">
        <text>(R)-2-benzylsuccinyl-CoA + oxidized [electron-transfer flavoprotein] + H(+) = (E)-2-benzylidenesuccinyl-CoA + reduced [electron-transfer flavoprotein]</text>
        <dbReference type="Rhea" id="RHEA:20876"/>
        <dbReference type="Rhea" id="RHEA-COMP:10685"/>
        <dbReference type="Rhea" id="RHEA-COMP:10686"/>
        <dbReference type="ChEBI" id="CHEBI:15378"/>
        <dbReference type="ChEBI" id="CHEBI:57253"/>
        <dbReference type="ChEBI" id="CHEBI:57692"/>
        <dbReference type="ChEBI" id="CHEBI:58307"/>
        <dbReference type="ChEBI" id="CHEBI:58519"/>
        <dbReference type="EC" id="1.3.8.3"/>
    </reaction>
</comment>
<comment type="cofactor">
    <cofactor evidence="2">
        <name>FAD</name>
        <dbReference type="ChEBI" id="CHEBI:57692"/>
    </cofactor>
</comment>
<comment type="activity regulation">
    <text evidence="2">Inhibited by (S)-benzylsuccinyl-CoA.</text>
</comment>
<comment type="biophysicochemical properties">
    <kinetics>
        <KM evidence="2">110 uM for benzylsuccinyl-CoA</KM>
    </kinetics>
    <phDependence>
        <text evidence="2">Optimum pH is 8.0.</text>
    </phDependence>
    <temperatureDependence>
        <text evidence="2">Optimum temperature is 50 degrees Celsius.</text>
    </temperatureDependence>
</comment>
<comment type="pathway">
    <text evidence="1 2">Xenobiotic degradation; toluene degradation.</text>
</comment>
<comment type="subunit">
    <text evidence="2">Homotetramer.</text>
</comment>
<comment type="induction">
    <text evidence="1">Induced by toluene.</text>
</comment>
<comment type="similarity">
    <text evidence="3">Belongs to the acyl-CoA dehydrogenase family.</text>
</comment>
<sequence>MDFSLSEEQTMLKEVARRFTANELMPLEKVLLEREMRMWTDGYTLLPEADHARLMKITQEMGFWGIEVDEKLGGQGLGMFAKTLVVEEMSKSLIGFSHHGFTLPPDAPNLYYLEECGSPAQRDKYVRRYCRGEIDSAMMATEPGAGSDISGLTTTAVRENGQWVINGSKIFISKCDKDELFFICIAVTDKEAPTKRRFTAFILDKDTPGLRIGAEIPVIGAMPTWSVYLDNVRVGDEAVLGEVGDAFIPLQNRFGVRRIELAAHCTGMAERLIQMMIDQANLRKTFGVALADRQTVQNWIADSTIELEQVRLQLYFTAWKSDQGHKDLRLEAASLKIAATEMLTRVADRAIQLHGGLGLSREMGIEYVARMVRIWRVVEGASEIHRMSIAKKLLTDGRTYSPFVAA</sequence>
<organism>
    <name type="scientific">Thauera aromatica</name>
    <dbReference type="NCBI Taxonomy" id="59405"/>
    <lineage>
        <taxon>Bacteria</taxon>
        <taxon>Pseudomonadati</taxon>
        <taxon>Pseudomonadota</taxon>
        <taxon>Betaproteobacteria</taxon>
        <taxon>Rhodocyclales</taxon>
        <taxon>Zoogloeaceae</taxon>
        <taxon>Thauera</taxon>
    </lineage>
</organism>
<gene>
    <name type="primary">bbsG</name>
</gene>
<proteinExistence type="evidence at protein level"/>